<gene>
    <name type="primary">P26</name>
</gene>
<feature type="chain" id="PRO_0000132894" description="Poxin">
    <location>
        <begin position="1"/>
        <end position="240"/>
    </location>
</feature>
<feature type="active site" description="Proton donor" evidence="1">
    <location>
        <position position="46"/>
    </location>
</feature>
<feature type="active site" description="Shared with catalytic histidine of dimeric partner" evidence="1">
    <location>
        <position position="181"/>
    </location>
</feature>
<feature type="active site" description="Proton acceptor; shared with catalytic histidine of dimeric partner" evidence="1">
    <location>
        <position position="185"/>
    </location>
</feature>
<feature type="site" description="Substrate binding" evidence="1">
    <location>
        <position position="93"/>
    </location>
</feature>
<feature type="site" description="Substrate binding" evidence="1">
    <location>
        <position position="146"/>
    </location>
</feature>
<feature type="site" description="Substrate binding" evidence="1">
    <location>
        <position position="226"/>
    </location>
</feature>
<feature type="strand" evidence="5">
    <location>
        <begin position="1"/>
        <end position="3"/>
    </location>
</feature>
<feature type="strand" evidence="5">
    <location>
        <begin position="6"/>
        <end position="10"/>
    </location>
</feature>
<feature type="strand" evidence="5">
    <location>
        <begin position="16"/>
        <end position="21"/>
    </location>
</feature>
<feature type="strand" evidence="5">
    <location>
        <begin position="28"/>
        <end position="30"/>
    </location>
</feature>
<feature type="strand" evidence="5">
    <location>
        <begin position="36"/>
        <end position="38"/>
    </location>
</feature>
<feature type="helix" evidence="5">
    <location>
        <begin position="40"/>
        <end position="44"/>
    </location>
</feature>
<feature type="strand" evidence="5">
    <location>
        <begin position="45"/>
        <end position="48"/>
    </location>
</feature>
<feature type="strand" evidence="5">
    <location>
        <begin position="51"/>
        <end position="55"/>
    </location>
</feature>
<feature type="strand" evidence="5">
    <location>
        <begin position="65"/>
        <end position="69"/>
    </location>
</feature>
<feature type="strand" evidence="5">
    <location>
        <begin position="75"/>
        <end position="79"/>
    </location>
</feature>
<feature type="strand" evidence="5">
    <location>
        <begin position="82"/>
        <end position="104"/>
    </location>
</feature>
<feature type="helix" evidence="5">
    <location>
        <begin position="106"/>
        <end position="110"/>
    </location>
</feature>
<feature type="strand" evidence="5">
    <location>
        <begin position="117"/>
        <end position="120"/>
    </location>
</feature>
<feature type="strand" evidence="5">
    <location>
        <begin position="123"/>
        <end position="128"/>
    </location>
</feature>
<feature type="strand" evidence="5">
    <location>
        <begin position="139"/>
        <end position="143"/>
    </location>
</feature>
<feature type="strand" evidence="5">
    <location>
        <begin position="153"/>
        <end position="157"/>
    </location>
</feature>
<feature type="strand" evidence="5">
    <location>
        <begin position="163"/>
        <end position="166"/>
    </location>
</feature>
<feature type="strand" evidence="5">
    <location>
        <begin position="172"/>
        <end position="174"/>
    </location>
</feature>
<feature type="strand" evidence="5">
    <location>
        <begin position="177"/>
        <end position="179"/>
    </location>
</feature>
<feature type="helix" evidence="5">
    <location>
        <begin position="181"/>
        <end position="190"/>
    </location>
</feature>
<feature type="strand" evidence="5">
    <location>
        <begin position="200"/>
        <end position="206"/>
    </location>
</feature>
<feature type="strand" evidence="5">
    <location>
        <begin position="208"/>
        <end position="217"/>
    </location>
</feature>
<feature type="strand" evidence="5">
    <location>
        <begin position="220"/>
        <end position="228"/>
    </location>
</feature>
<reference key="1">
    <citation type="journal article" date="1986" name="J. Gen. Virol.">
        <title>Nucleotide sequence of a portion of the Autographa californica nuclear polyhedrosis virus genome containing the EcoRI site-rich region (hr5) and an open reading frame just 5' of the p10 gene.</title>
        <authorList>
            <person name="Liu A."/>
            <person name="Qin J."/>
            <person name="Rankin C."/>
            <person name="Hardin S.E."/>
            <person name="Weaver R.F."/>
        </authorList>
    </citation>
    <scope>NUCLEOTIDE SEQUENCE [GENOMIC DNA]</scope>
    <source>
        <strain>L1</strain>
    </source>
</reference>
<reference key="2">
    <citation type="journal article" date="1994" name="Virology">
        <title>The complete DNA sequence of Autographa californica nuclear polyhedrosis virus.</title>
        <authorList>
            <person name="Ayres M.D."/>
            <person name="Howard S.C."/>
            <person name="Kuzio J."/>
            <person name="Lopez-Ferber M."/>
            <person name="Possee R.D."/>
        </authorList>
    </citation>
    <scope>NUCLEOTIDE SEQUENCE [LARGE SCALE GENOMIC DNA]</scope>
    <source>
        <strain>C6</strain>
    </source>
</reference>
<reference key="3">
    <citation type="journal article" date="2019" name="Nature">
        <title>Viral and metazoan poxins are cGAMP-specific nucleases that restrict cGAS-STING signalling.</title>
        <authorList>
            <person name="Eaglesham J.B."/>
            <person name="Pan Y."/>
            <person name="Kupper T.S."/>
            <person name="Kranzusch P.J."/>
        </authorList>
    </citation>
    <scope>FUNCTION</scope>
    <scope>CATALYTIC ACTIVITY</scope>
</reference>
<name>POXIN_NPVAC</name>
<dbReference type="EC" id="3.1.-.-" evidence="1 2"/>
<dbReference type="EMBL" id="X04611">
    <property type="protein sequence ID" value="CAA28280.1"/>
    <property type="molecule type" value="Genomic_DNA"/>
</dbReference>
<dbReference type="EMBL" id="L22858">
    <property type="protein sequence ID" value="AAA66766.1"/>
    <property type="molecule type" value="Genomic_DNA"/>
</dbReference>
<dbReference type="PIR" id="A29150">
    <property type="entry name" value="WMNVP6"/>
</dbReference>
<dbReference type="PDB" id="6XB3">
    <property type="method" value="X-ray"/>
    <property type="resolution" value="1.90 A"/>
    <property type="chains" value="A/B/C/D/E/F/G/H/I/J/K/L/M/N/O/P=1-240"/>
</dbReference>
<dbReference type="PDBsum" id="6XB3"/>
<dbReference type="SMR" id="P08358"/>
<dbReference type="KEGG" id="vg:1403969"/>
<dbReference type="OrthoDB" id="7755at10239"/>
<dbReference type="Proteomes" id="UP000008292">
    <property type="component" value="Segment"/>
</dbReference>
<dbReference type="GO" id="GO:0061507">
    <property type="term" value="F:2',3'-cyclic GMP-AMP binding"/>
    <property type="evidence" value="ECO:0007669"/>
    <property type="project" value="UniProtKB-UniRule"/>
</dbReference>
<dbReference type="GO" id="GO:0004518">
    <property type="term" value="F:nuclease activity"/>
    <property type="evidence" value="ECO:0007669"/>
    <property type="project" value="UniProtKB-UniRule"/>
</dbReference>
<dbReference type="HAMAP" id="MF_04143">
    <property type="entry name" value="Poxins"/>
    <property type="match status" value="1"/>
</dbReference>
<dbReference type="InterPro" id="IPR006853">
    <property type="entry name" value="Poxin_vir"/>
</dbReference>
<dbReference type="Pfam" id="PF04766">
    <property type="entry name" value="Baculo_p26"/>
    <property type="match status" value="1"/>
</dbReference>
<organismHost>
    <name type="scientific">Lepidoptera</name>
    <name type="common">butterflies and moths</name>
    <dbReference type="NCBI Taxonomy" id="7088"/>
</organismHost>
<comment type="function">
    <text evidence="1 2">Nuclease that cleaves host 2',3'-cGAMP.</text>
</comment>
<comment type="catalytic activity">
    <reaction evidence="1 2">
        <text>2',3'-cGAMP + H2O = Gp(2'-5')Ap(3') + H(+)</text>
        <dbReference type="Rhea" id="RHEA:59472"/>
        <dbReference type="ChEBI" id="CHEBI:15377"/>
        <dbReference type="ChEBI" id="CHEBI:15378"/>
        <dbReference type="ChEBI" id="CHEBI:143093"/>
        <dbReference type="ChEBI" id="CHEBI:143098"/>
    </reaction>
    <physiologicalReaction direction="left-to-right" evidence="1 4">
        <dbReference type="Rhea" id="RHEA:59473"/>
    </physiologicalReaction>
</comment>
<comment type="subunit">
    <text evidence="1">Homodimer.</text>
</comment>
<comment type="domain">
    <text evidence="1">The substrate binding site is formed by the N-terminus of a monomer and the C-terminus of the opposite monomer.</text>
</comment>
<comment type="similarity">
    <text evidence="1">Belongs to the poxin family.</text>
</comment>
<keyword id="KW-0002">3D-structure</keyword>
<keyword id="KW-0378">Hydrolase</keyword>
<keyword id="KW-0540">Nuclease</keyword>
<keyword id="KW-1185">Reference proteome</keyword>
<proteinExistence type="evidence at protein level"/>
<evidence type="ECO:0000255" key="1">
    <source>
        <dbReference type="HAMAP-Rule" id="MF_04143"/>
    </source>
</evidence>
<evidence type="ECO:0000269" key="2">
    <source>
    </source>
</evidence>
<evidence type="ECO:0000303" key="3">
    <source>
    </source>
</evidence>
<evidence type="ECO:0000305" key="4">
    <source>
    </source>
</evidence>
<evidence type="ECO:0007829" key="5">
    <source>
        <dbReference type="PDB" id="6XB3"/>
    </source>
</evidence>
<accession>P08358</accession>
<organism>
    <name type="scientific">Autographa californica nuclear polyhedrosis virus</name>
    <name type="common">AcMNPV</name>
    <dbReference type="NCBI Taxonomy" id="46015"/>
    <lineage>
        <taxon>Viruses</taxon>
        <taxon>Viruses incertae sedis</taxon>
        <taxon>Naldaviricetes</taxon>
        <taxon>Lefavirales</taxon>
        <taxon>Baculoviridae</taxon>
        <taxon>Alphabaculovirus</taxon>
        <taxon>Alphabaculovirus aucalifornicae</taxon>
    </lineage>
</organism>
<protein>
    <recommendedName>
        <fullName evidence="1 3">Poxin</fullName>
        <ecNumber evidence="1 2">3.1.-.-</ecNumber>
    </recommendedName>
    <alternativeName>
        <fullName>Protein p26</fullName>
    </alternativeName>
    <alternativeName>
        <fullName>p26</fullName>
    </alternativeName>
</protein>
<sequence length="240" mass="27282">MELYNIKYAIDPTNKIVIEQVDNVDAFVHILEPGQEVFDETLSQYHQFPGVVSSIIFPQLVLNTIISVLSEDGSLLTLKLENTCFNFHVCNKRFVFGNLPAAVVNNETKQKLRIGAPIFAGKKLVSVVTAFHRVGENEWLLPVTGIREASQLSGHMKVLNGVRVEKWRPNMSVYGTVQLPYDKIKQHALEQENKTPNALESCVLFYKDSEIRITYNKGDYEIMHLRMPGPLIQPNTIYYS</sequence>